<accession>O59761</accession>
<gene>
    <name type="primary">tyw1</name>
    <name type="ORF">SPCC1020.08</name>
</gene>
<protein>
    <recommendedName>
        <fullName>S-adenosyl-L-methionine-dependent tRNA 4-demethylwyosine synthase</fullName>
        <ecNumber>4.1.3.44</ecNumber>
    </recommendedName>
    <alternativeName>
        <fullName>tRNA wybutosine-synthesizing protein 1</fullName>
    </alternativeName>
</protein>
<name>TYW1_SCHPO</name>
<keyword id="KW-0004">4Fe-4S</keyword>
<keyword id="KW-0408">Iron</keyword>
<keyword id="KW-0411">Iron-sulfur</keyword>
<keyword id="KW-0456">Lyase</keyword>
<keyword id="KW-0479">Metal-binding</keyword>
<keyword id="KW-0547">Nucleotide-binding</keyword>
<keyword id="KW-1185">Reference proteome</keyword>
<keyword id="KW-0949">S-adenosyl-L-methionine</keyword>
<keyword id="KW-0819">tRNA processing</keyword>
<comment type="function">
    <text evidence="1">Probable component of the wybutosine biosynthesis pathway. Wybutosine is a hyper modified guanosine with a tricyclic base found at the 3'-position adjacent to the anticodon of eukaryotic phenylalanine tRNA. Catalyzes the condensation of N-methylguanine with 2 carbon atoms from pyruvate to form the tricyclic 4-demethylwyosine, an intermediate in wybutosine biosynthesis (By similarity).</text>
</comment>
<comment type="catalytic activity">
    <reaction>
        <text>N(1)-methylguanosine(37) in tRNA(Phe) + pyruvate + S-adenosyl-L-methionine = 4-demethylwyosine(37) in tRNA(Phe) + 5'-deoxyadenosine + L-methionine + CO2 + H2O</text>
        <dbReference type="Rhea" id="RHEA:36347"/>
        <dbReference type="Rhea" id="RHEA-COMP:10164"/>
        <dbReference type="Rhea" id="RHEA-COMP:10165"/>
        <dbReference type="ChEBI" id="CHEBI:15361"/>
        <dbReference type="ChEBI" id="CHEBI:15377"/>
        <dbReference type="ChEBI" id="CHEBI:16526"/>
        <dbReference type="ChEBI" id="CHEBI:17319"/>
        <dbReference type="ChEBI" id="CHEBI:57844"/>
        <dbReference type="ChEBI" id="CHEBI:59789"/>
        <dbReference type="ChEBI" id="CHEBI:64315"/>
        <dbReference type="ChEBI" id="CHEBI:73542"/>
        <dbReference type="EC" id="4.1.3.44"/>
    </reaction>
</comment>
<comment type="cofactor">
    <cofactor evidence="1">
        <name>[4Fe-4S] cluster</name>
        <dbReference type="ChEBI" id="CHEBI:49883"/>
    </cofactor>
    <text evidence="1">Binds 1 [4Fe-4S] cluster. The cluster is coordinated with 3 cysteines and an exchangeable S-adenosyl-L-methionine.</text>
</comment>
<comment type="pathway">
    <text>tRNA modification; wybutosine-tRNA(Phe) biosynthesis.</text>
</comment>
<comment type="similarity">
    <text evidence="5">Belongs to the TYW1 family.</text>
</comment>
<sequence length="688" mass="78188">MGYSLGYIGEHWEEYRAVLYIVLLLPVLIHFLIRRKTQLSNSDKSSEKKDEVKKQREVKRFKRVGKRGKIGSPSSSIRKQNDTIDWKNSPLCVFYSTLGGTAERYAKQVHEELSSLLQRDDIQLLNLDYVDLSEYFVSCPENAIYLVVLPSYEIESSIDYYLSSLQESFSDFRVPKDPLHGLSGYAVFGLGDMENYPGDKFCYQAIQADKWIKKLGARRLAPLGVVNTQLAPTAQIDALLQWTRSVAECLKNGTLLKIGNTDSLSSDVMDVEDMGSMMAKAKAEAALPVGTKEMVSTESPTYKALTKQGYSVVGSHSGVKICRWTKSAMRGRGFCYKYSFYGIRSHLCMEATPSLACANKCTFCWRHGTNPVGTSWRWKVDPPEMILQGILKAHYAKLKLMKGVPGVLPDRYEEASRVRHCALSLVGEPIFYPYINEFVSMLHEREISSFLVTNAQHPEALRNMGMVTQLYVSVDASTKQSLKSVDRPLFKDFWERMLTCLEILREKRQRTVYRMTLVKGFNMEQIKEYTELIRLGVPCFIEVKGVTYSGNSDQSPLTMKNVPYYEEVIDFVKKLIEYIDIHLQDLGVRYEIAAEHAHSCSILVAQTAFKKDGHWHTHIDYPKFFELIRTKKDFGPFDYMASTPDFAMFGNGGFSPEDTRFHRKKKTQTSKPISATISETATISEAAA</sequence>
<organism>
    <name type="scientific">Schizosaccharomyces pombe (strain 972 / ATCC 24843)</name>
    <name type="common">Fission yeast</name>
    <dbReference type="NCBI Taxonomy" id="284812"/>
    <lineage>
        <taxon>Eukaryota</taxon>
        <taxon>Fungi</taxon>
        <taxon>Dikarya</taxon>
        <taxon>Ascomycota</taxon>
        <taxon>Taphrinomycotina</taxon>
        <taxon>Schizosaccharomycetes</taxon>
        <taxon>Schizosaccharomycetales</taxon>
        <taxon>Schizosaccharomycetaceae</taxon>
        <taxon>Schizosaccharomyces</taxon>
    </lineage>
</organism>
<proteinExistence type="inferred from homology"/>
<dbReference type="EC" id="4.1.3.44"/>
<dbReference type="EMBL" id="CU329672">
    <property type="protein sequence ID" value="CAA18996.1"/>
    <property type="molecule type" value="Genomic_DNA"/>
</dbReference>
<dbReference type="PIR" id="T40832">
    <property type="entry name" value="T40832"/>
</dbReference>
<dbReference type="RefSeq" id="NP_587951.1">
    <property type="nucleotide sequence ID" value="NM_001022942.2"/>
</dbReference>
<dbReference type="SMR" id="O59761"/>
<dbReference type="BioGRID" id="275743">
    <property type="interactions" value="6"/>
</dbReference>
<dbReference type="FunCoup" id="O59761">
    <property type="interactions" value="368"/>
</dbReference>
<dbReference type="STRING" id="284812.O59761"/>
<dbReference type="iPTMnet" id="O59761"/>
<dbReference type="PaxDb" id="4896-SPCC1020.08.1"/>
<dbReference type="EnsemblFungi" id="SPCC1020.08.1">
    <property type="protein sequence ID" value="SPCC1020.08.1:pep"/>
    <property type="gene ID" value="SPCC1020.08"/>
</dbReference>
<dbReference type="GeneID" id="2539172"/>
<dbReference type="KEGG" id="spo:2539172"/>
<dbReference type="PomBase" id="SPCC1020.08">
    <property type="gene designation" value="tyw1"/>
</dbReference>
<dbReference type="VEuPathDB" id="FungiDB:SPCC1020.08"/>
<dbReference type="eggNOG" id="KOG1160">
    <property type="taxonomic scope" value="Eukaryota"/>
</dbReference>
<dbReference type="HOGENOM" id="CLU_007952_1_2_1"/>
<dbReference type="InParanoid" id="O59761"/>
<dbReference type="OMA" id="FHVNGKW"/>
<dbReference type="PhylomeDB" id="O59761"/>
<dbReference type="UniPathway" id="UPA00375"/>
<dbReference type="PRO" id="PR:O59761"/>
<dbReference type="Proteomes" id="UP000002485">
    <property type="component" value="Chromosome III"/>
</dbReference>
<dbReference type="GO" id="GO:0005783">
    <property type="term" value="C:endoplasmic reticulum"/>
    <property type="evidence" value="ECO:0007005"/>
    <property type="project" value="PomBase"/>
</dbReference>
<dbReference type="GO" id="GO:0051539">
    <property type="term" value="F:4 iron, 4 sulfur cluster binding"/>
    <property type="evidence" value="ECO:0007669"/>
    <property type="project" value="UniProtKB-KW"/>
</dbReference>
<dbReference type="GO" id="GO:0010181">
    <property type="term" value="F:FMN binding"/>
    <property type="evidence" value="ECO:0007669"/>
    <property type="project" value="InterPro"/>
</dbReference>
<dbReference type="GO" id="GO:0046872">
    <property type="term" value="F:metal ion binding"/>
    <property type="evidence" value="ECO:0007669"/>
    <property type="project" value="UniProtKB-KW"/>
</dbReference>
<dbReference type="GO" id="GO:0102521">
    <property type="term" value="F:tRNA-4-demethylwyosine synthase activity"/>
    <property type="evidence" value="ECO:0007669"/>
    <property type="project" value="UniProtKB-EC"/>
</dbReference>
<dbReference type="GO" id="GO:0031591">
    <property type="term" value="P:wybutosine biosynthetic process"/>
    <property type="evidence" value="ECO:0000318"/>
    <property type="project" value="GO_Central"/>
</dbReference>
<dbReference type="CDD" id="cd01335">
    <property type="entry name" value="Radical_SAM"/>
    <property type="match status" value="1"/>
</dbReference>
<dbReference type="FunFam" id="3.20.20.70:FF:000196">
    <property type="entry name" value="S-adenosyl-L-methionine-dependent tRNA 4-demethylwyosine synthase"/>
    <property type="match status" value="1"/>
</dbReference>
<dbReference type="Gene3D" id="3.40.50.360">
    <property type="match status" value="1"/>
</dbReference>
<dbReference type="Gene3D" id="3.20.20.70">
    <property type="entry name" value="Aldolase class I"/>
    <property type="match status" value="1"/>
</dbReference>
<dbReference type="InterPro" id="IPR013785">
    <property type="entry name" value="Aldolase_TIM"/>
</dbReference>
<dbReference type="InterPro" id="IPR001094">
    <property type="entry name" value="Flavdoxin-like"/>
</dbReference>
<dbReference type="InterPro" id="IPR008254">
    <property type="entry name" value="Flavodoxin/NO_synth"/>
</dbReference>
<dbReference type="InterPro" id="IPR029039">
    <property type="entry name" value="Flavoprotein-like_sf"/>
</dbReference>
<dbReference type="InterPro" id="IPR007197">
    <property type="entry name" value="rSAM"/>
</dbReference>
<dbReference type="InterPro" id="IPR013917">
    <property type="entry name" value="tRNA_wybutosine-synth"/>
</dbReference>
<dbReference type="InterPro" id="IPR034556">
    <property type="entry name" value="tRNA_wybutosine-synthase"/>
</dbReference>
<dbReference type="PANTHER" id="PTHR13930">
    <property type="entry name" value="S-ADENOSYL-L-METHIONINE-DEPENDENT TRNA 4-DEMETHYLWYOSINE SYNTHASE"/>
    <property type="match status" value="1"/>
</dbReference>
<dbReference type="PANTHER" id="PTHR13930:SF0">
    <property type="entry name" value="S-ADENOSYL-L-METHIONINE-DEPENDENT TRNA 4-DEMETHYLWYOSINE SYNTHASE TYW1-RELATED"/>
    <property type="match status" value="1"/>
</dbReference>
<dbReference type="Pfam" id="PF00258">
    <property type="entry name" value="Flavodoxin_1"/>
    <property type="match status" value="1"/>
</dbReference>
<dbReference type="Pfam" id="PF04055">
    <property type="entry name" value="Radical_SAM"/>
    <property type="match status" value="1"/>
</dbReference>
<dbReference type="Pfam" id="PF08608">
    <property type="entry name" value="Wyosine_form"/>
    <property type="match status" value="1"/>
</dbReference>
<dbReference type="PRINTS" id="PR00369">
    <property type="entry name" value="FLAVODOXIN"/>
</dbReference>
<dbReference type="SFLD" id="SFLDS00029">
    <property type="entry name" value="Radical_SAM"/>
    <property type="match status" value="1"/>
</dbReference>
<dbReference type="SFLD" id="SFLDF00284">
    <property type="entry name" value="tRNA_wybutosine-synthesizing"/>
    <property type="match status" value="1"/>
</dbReference>
<dbReference type="SUPFAM" id="SSF52218">
    <property type="entry name" value="Flavoproteins"/>
    <property type="match status" value="1"/>
</dbReference>
<dbReference type="SUPFAM" id="SSF102114">
    <property type="entry name" value="Radical SAM enzymes"/>
    <property type="match status" value="1"/>
</dbReference>
<dbReference type="PROSITE" id="PS50902">
    <property type="entry name" value="FLAVODOXIN_LIKE"/>
    <property type="match status" value="1"/>
</dbReference>
<dbReference type="PROSITE" id="PS51918">
    <property type="entry name" value="RADICAL_SAM"/>
    <property type="match status" value="1"/>
</dbReference>
<evidence type="ECO:0000250" key="1"/>
<evidence type="ECO:0000255" key="2"/>
<evidence type="ECO:0000255" key="3">
    <source>
        <dbReference type="PROSITE-ProRule" id="PRU00088"/>
    </source>
</evidence>
<evidence type="ECO:0000255" key="4">
    <source>
        <dbReference type="PROSITE-ProRule" id="PRU01266"/>
    </source>
</evidence>
<evidence type="ECO:0000305" key="5"/>
<reference key="1">
    <citation type="journal article" date="2002" name="Nature">
        <title>The genome sequence of Schizosaccharomyces pombe.</title>
        <authorList>
            <person name="Wood V."/>
            <person name="Gwilliam R."/>
            <person name="Rajandream M.A."/>
            <person name="Lyne M.H."/>
            <person name="Lyne R."/>
            <person name="Stewart A."/>
            <person name="Sgouros J.G."/>
            <person name="Peat N."/>
            <person name="Hayles J."/>
            <person name="Baker S.G."/>
            <person name="Basham D."/>
            <person name="Bowman S."/>
            <person name="Brooks K."/>
            <person name="Brown D."/>
            <person name="Brown S."/>
            <person name="Chillingworth T."/>
            <person name="Churcher C.M."/>
            <person name="Collins M."/>
            <person name="Connor R."/>
            <person name="Cronin A."/>
            <person name="Davis P."/>
            <person name="Feltwell T."/>
            <person name="Fraser A."/>
            <person name="Gentles S."/>
            <person name="Goble A."/>
            <person name="Hamlin N."/>
            <person name="Harris D.E."/>
            <person name="Hidalgo J."/>
            <person name="Hodgson G."/>
            <person name="Holroyd S."/>
            <person name="Hornsby T."/>
            <person name="Howarth S."/>
            <person name="Huckle E.J."/>
            <person name="Hunt S."/>
            <person name="Jagels K."/>
            <person name="James K.D."/>
            <person name="Jones L."/>
            <person name="Jones M."/>
            <person name="Leather S."/>
            <person name="McDonald S."/>
            <person name="McLean J."/>
            <person name="Mooney P."/>
            <person name="Moule S."/>
            <person name="Mungall K.L."/>
            <person name="Murphy L.D."/>
            <person name="Niblett D."/>
            <person name="Odell C."/>
            <person name="Oliver K."/>
            <person name="O'Neil S."/>
            <person name="Pearson D."/>
            <person name="Quail M.A."/>
            <person name="Rabbinowitsch E."/>
            <person name="Rutherford K.M."/>
            <person name="Rutter S."/>
            <person name="Saunders D."/>
            <person name="Seeger K."/>
            <person name="Sharp S."/>
            <person name="Skelton J."/>
            <person name="Simmonds M.N."/>
            <person name="Squares R."/>
            <person name="Squares S."/>
            <person name="Stevens K."/>
            <person name="Taylor K."/>
            <person name="Taylor R.G."/>
            <person name="Tivey A."/>
            <person name="Walsh S.V."/>
            <person name="Warren T."/>
            <person name="Whitehead S."/>
            <person name="Woodward J.R."/>
            <person name="Volckaert G."/>
            <person name="Aert R."/>
            <person name="Robben J."/>
            <person name="Grymonprez B."/>
            <person name="Weltjens I."/>
            <person name="Vanstreels E."/>
            <person name="Rieger M."/>
            <person name="Schaefer M."/>
            <person name="Mueller-Auer S."/>
            <person name="Gabel C."/>
            <person name="Fuchs M."/>
            <person name="Duesterhoeft A."/>
            <person name="Fritzc C."/>
            <person name="Holzer E."/>
            <person name="Moestl D."/>
            <person name="Hilbert H."/>
            <person name="Borzym K."/>
            <person name="Langer I."/>
            <person name="Beck A."/>
            <person name="Lehrach H."/>
            <person name="Reinhardt R."/>
            <person name="Pohl T.M."/>
            <person name="Eger P."/>
            <person name="Zimmermann W."/>
            <person name="Wedler H."/>
            <person name="Wambutt R."/>
            <person name="Purnelle B."/>
            <person name="Goffeau A."/>
            <person name="Cadieu E."/>
            <person name="Dreano S."/>
            <person name="Gloux S."/>
            <person name="Lelaure V."/>
            <person name="Mottier S."/>
            <person name="Galibert F."/>
            <person name="Aves S.J."/>
            <person name="Xiang Z."/>
            <person name="Hunt C."/>
            <person name="Moore K."/>
            <person name="Hurst S.M."/>
            <person name="Lucas M."/>
            <person name="Rochet M."/>
            <person name="Gaillardin C."/>
            <person name="Tallada V.A."/>
            <person name="Garzon A."/>
            <person name="Thode G."/>
            <person name="Daga R.R."/>
            <person name="Cruzado L."/>
            <person name="Jimenez J."/>
            <person name="Sanchez M."/>
            <person name="del Rey F."/>
            <person name="Benito J."/>
            <person name="Dominguez A."/>
            <person name="Revuelta J.L."/>
            <person name="Moreno S."/>
            <person name="Armstrong J."/>
            <person name="Forsburg S.L."/>
            <person name="Cerutti L."/>
            <person name="Lowe T."/>
            <person name="McCombie W.R."/>
            <person name="Paulsen I."/>
            <person name="Potashkin J."/>
            <person name="Shpakovski G.V."/>
            <person name="Ussery D."/>
            <person name="Barrell B.G."/>
            <person name="Nurse P."/>
        </authorList>
    </citation>
    <scope>NUCLEOTIDE SEQUENCE [LARGE SCALE GENOMIC DNA]</scope>
    <source>
        <strain>972 / ATCC 24843</strain>
    </source>
</reference>
<feature type="chain" id="PRO_0000281834" description="S-adenosyl-L-methionine-dependent tRNA 4-demethylwyosine synthase">
    <location>
        <begin position="1"/>
        <end position="688"/>
    </location>
</feature>
<feature type="domain" description="Flavodoxin-like" evidence="3">
    <location>
        <begin position="91"/>
        <end position="247"/>
    </location>
</feature>
<feature type="domain" description="Radical SAM core" evidence="4">
    <location>
        <begin position="341"/>
        <end position="580"/>
    </location>
</feature>
<feature type="binding site" evidence="3">
    <location>
        <begin position="97"/>
        <end position="101"/>
    </location>
    <ligand>
        <name>FMN</name>
        <dbReference type="ChEBI" id="CHEBI:58210"/>
    </ligand>
</feature>
<feature type="binding site" evidence="3">
    <location>
        <begin position="187"/>
        <end position="221"/>
    </location>
    <ligand>
        <name>FMN</name>
        <dbReference type="ChEBI" id="CHEBI:58210"/>
    </ligand>
</feature>
<feature type="binding site" evidence="2">
    <location>
        <position position="357"/>
    </location>
    <ligand>
        <name>[4Fe-4S] cluster</name>
        <dbReference type="ChEBI" id="CHEBI:49883"/>
        <note>4Fe-4S-S-AdoMet</note>
    </ligand>
</feature>
<feature type="binding site" evidence="2">
    <location>
        <position position="361"/>
    </location>
    <ligand>
        <name>[4Fe-4S] cluster</name>
        <dbReference type="ChEBI" id="CHEBI:49883"/>
        <note>4Fe-4S-S-AdoMet</note>
    </ligand>
</feature>
<feature type="binding site" evidence="2">
    <location>
        <position position="364"/>
    </location>
    <ligand>
        <name>[4Fe-4S] cluster</name>
        <dbReference type="ChEBI" id="CHEBI:49883"/>
        <note>4Fe-4S-S-AdoMet</note>
    </ligand>
</feature>